<feature type="peptide" id="PRO_0000335873" description="Bradykinin-potentiating peptide 11">
    <location>
        <begin position="1"/>
        <end position="11"/>
    </location>
</feature>
<feature type="modified residue" description="Pyrrolidone carboxylic acid" evidence="2">
    <location>
        <position position="1"/>
    </location>
</feature>
<proteinExistence type="evidence at protein level"/>
<protein>
    <recommendedName>
        <fullName>Bradykinin-potentiating peptide 11</fullName>
        <shortName>BPP-11</shortName>
    </recommendedName>
</protein>
<name>BPP11_BOTAL</name>
<comment type="function">
    <text evidence="1">This peptide both inhibits the activity of the angiotensin-converting enzyme (ACE) and enhances the action of bradykinin by inhibiting the peptidases that inactivate it. It acts as an indirect hypotensive agent (By similarity).</text>
</comment>
<comment type="subcellular location">
    <subcellularLocation>
        <location evidence="2">Secreted</location>
    </subcellularLocation>
</comment>
<comment type="tissue specificity">
    <text evidence="2">Expressed by the venom gland.</text>
</comment>
<comment type="mass spectrometry"/>
<comment type="similarity">
    <text evidence="3">Belongs to the bradykinin-potentiating peptide family.</text>
</comment>
<sequence>QWPDPSSDIPP</sequence>
<keyword id="KW-0903">Direct protein sequencing</keyword>
<keyword id="KW-0382">Hypotensive agent</keyword>
<keyword id="KW-0481">Metalloenzyme inhibitor</keyword>
<keyword id="KW-0483">Metalloprotease inhibitor</keyword>
<keyword id="KW-0646">Protease inhibitor</keyword>
<keyword id="KW-0873">Pyrrolidone carboxylic acid</keyword>
<keyword id="KW-0964">Secreted</keyword>
<keyword id="KW-0800">Toxin</keyword>
<evidence type="ECO:0000250" key="1"/>
<evidence type="ECO:0000269" key="2">
    <source>
    </source>
</evidence>
<evidence type="ECO:0000305" key="3"/>
<accession>P0C7J7</accession>
<reference key="1">
    <citation type="journal article" date="2005" name="Rapid Commun. Mass Spectrom.">
        <title>Fast analysis of low molecular mass compounds present in snake venom: identification of ten new pyroglutamate-containing peptides.</title>
        <authorList>
            <person name="Wermelinger L.S."/>
            <person name="Dutra D.L."/>
            <person name="Oliveira-Carvalho A.L."/>
            <person name="Soares M.R."/>
            <person name="Bloch C. Jr."/>
            <person name="Zingali R.B."/>
        </authorList>
    </citation>
    <scope>PROTEIN SEQUENCE</scope>
    <scope>SUBCELLULAR LOCATION</scope>
    <scope>TISSUE SPECIFICITY</scope>
    <scope>MASS SPECTROMETRY</scope>
    <scope>PYROGLUTAMATE FORMATION AT GLN-1</scope>
    <source>
        <tissue>Venom</tissue>
    </source>
</reference>
<organism>
    <name type="scientific">Bothrops alternatus</name>
    <name type="common">Urutu</name>
    <name type="synonym">Rhinocerophis alternatus</name>
    <dbReference type="NCBI Taxonomy" id="64174"/>
    <lineage>
        <taxon>Eukaryota</taxon>
        <taxon>Metazoa</taxon>
        <taxon>Chordata</taxon>
        <taxon>Craniata</taxon>
        <taxon>Vertebrata</taxon>
        <taxon>Euteleostomi</taxon>
        <taxon>Lepidosauria</taxon>
        <taxon>Squamata</taxon>
        <taxon>Bifurcata</taxon>
        <taxon>Unidentata</taxon>
        <taxon>Episquamata</taxon>
        <taxon>Toxicofera</taxon>
        <taxon>Serpentes</taxon>
        <taxon>Colubroidea</taxon>
        <taxon>Viperidae</taxon>
        <taxon>Crotalinae</taxon>
        <taxon>Bothrops</taxon>
    </lineage>
</organism>
<dbReference type="GO" id="GO:0005576">
    <property type="term" value="C:extracellular region"/>
    <property type="evidence" value="ECO:0007669"/>
    <property type="project" value="UniProtKB-SubCell"/>
</dbReference>
<dbReference type="GO" id="GO:0030414">
    <property type="term" value="F:peptidase inhibitor activity"/>
    <property type="evidence" value="ECO:0007669"/>
    <property type="project" value="UniProtKB-KW"/>
</dbReference>
<dbReference type="GO" id="GO:0090729">
    <property type="term" value="F:toxin activity"/>
    <property type="evidence" value="ECO:0007669"/>
    <property type="project" value="UniProtKB-KW"/>
</dbReference>
<dbReference type="GO" id="GO:0008217">
    <property type="term" value="P:regulation of blood pressure"/>
    <property type="evidence" value="ECO:0007669"/>
    <property type="project" value="UniProtKB-KW"/>
</dbReference>